<proteinExistence type="inferred from homology"/>
<name>SYL_FRAAA</name>
<keyword id="KW-0030">Aminoacyl-tRNA synthetase</keyword>
<keyword id="KW-0067">ATP-binding</keyword>
<keyword id="KW-0963">Cytoplasm</keyword>
<keyword id="KW-0436">Ligase</keyword>
<keyword id="KW-0547">Nucleotide-binding</keyword>
<keyword id="KW-0648">Protein biosynthesis</keyword>
<keyword id="KW-1185">Reference proteome</keyword>
<comment type="catalytic activity">
    <reaction evidence="1">
        <text>tRNA(Leu) + L-leucine + ATP = L-leucyl-tRNA(Leu) + AMP + diphosphate</text>
        <dbReference type="Rhea" id="RHEA:11688"/>
        <dbReference type="Rhea" id="RHEA-COMP:9613"/>
        <dbReference type="Rhea" id="RHEA-COMP:9622"/>
        <dbReference type="ChEBI" id="CHEBI:30616"/>
        <dbReference type="ChEBI" id="CHEBI:33019"/>
        <dbReference type="ChEBI" id="CHEBI:57427"/>
        <dbReference type="ChEBI" id="CHEBI:78442"/>
        <dbReference type="ChEBI" id="CHEBI:78494"/>
        <dbReference type="ChEBI" id="CHEBI:456215"/>
        <dbReference type="EC" id="6.1.1.4"/>
    </reaction>
</comment>
<comment type="subcellular location">
    <subcellularLocation>
        <location evidence="1">Cytoplasm</location>
    </subcellularLocation>
</comment>
<comment type="similarity">
    <text evidence="1">Belongs to the class-I aminoacyl-tRNA synthetase family.</text>
</comment>
<evidence type="ECO:0000255" key="1">
    <source>
        <dbReference type="HAMAP-Rule" id="MF_00049"/>
    </source>
</evidence>
<evidence type="ECO:0000256" key="2">
    <source>
        <dbReference type="SAM" id="MobiDB-lite"/>
    </source>
</evidence>
<protein>
    <recommendedName>
        <fullName evidence="1">Leucine--tRNA ligase</fullName>
        <ecNumber evidence="1">6.1.1.4</ecNumber>
    </recommendedName>
    <alternativeName>
        <fullName evidence="1">Leucyl-tRNA synthetase</fullName>
        <shortName evidence="1">LeuRS</shortName>
    </alternativeName>
</protein>
<organism>
    <name type="scientific">Frankia alni (strain DSM 45986 / CECT 9034 / ACN14a)</name>
    <dbReference type="NCBI Taxonomy" id="326424"/>
    <lineage>
        <taxon>Bacteria</taxon>
        <taxon>Bacillati</taxon>
        <taxon>Actinomycetota</taxon>
        <taxon>Actinomycetes</taxon>
        <taxon>Frankiales</taxon>
        <taxon>Frankiaceae</taxon>
        <taxon>Frankia</taxon>
    </lineage>
</organism>
<reference key="1">
    <citation type="journal article" date="2007" name="Genome Res.">
        <title>Genome characteristics of facultatively symbiotic Frankia sp. strains reflect host range and host plant biogeography.</title>
        <authorList>
            <person name="Normand P."/>
            <person name="Lapierre P."/>
            <person name="Tisa L.S."/>
            <person name="Gogarten J.P."/>
            <person name="Alloisio N."/>
            <person name="Bagnarol E."/>
            <person name="Bassi C.A."/>
            <person name="Berry A.M."/>
            <person name="Bickhart D.M."/>
            <person name="Choisne N."/>
            <person name="Couloux A."/>
            <person name="Cournoyer B."/>
            <person name="Cruveiller S."/>
            <person name="Daubin V."/>
            <person name="Demange N."/>
            <person name="Francino M.P."/>
            <person name="Goltsman E."/>
            <person name="Huang Y."/>
            <person name="Kopp O.R."/>
            <person name="Labarre L."/>
            <person name="Lapidus A."/>
            <person name="Lavire C."/>
            <person name="Marechal J."/>
            <person name="Martinez M."/>
            <person name="Mastronunzio J.E."/>
            <person name="Mullin B.C."/>
            <person name="Niemann J."/>
            <person name="Pujic P."/>
            <person name="Rawnsley T."/>
            <person name="Rouy Z."/>
            <person name="Schenowitz C."/>
            <person name="Sellstedt A."/>
            <person name="Tavares F."/>
            <person name="Tomkins J.P."/>
            <person name="Vallenet D."/>
            <person name="Valverde C."/>
            <person name="Wall L.G."/>
            <person name="Wang Y."/>
            <person name="Medigue C."/>
            <person name="Benson D.R."/>
        </authorList>
    </citation>
    <scope>NUCLEOTIDE SEQUENCE [LARGE SCALE GENOMIC DNA]</scope>
    <source>
        <strain>DSM 45986 / CECT 9034 / ACN14a</strain>
    </source>
</reference>
<dbReference type="EC" id="6.1.1.4" evidence="1"/>
<dbReference type="EMBL" id="CT573213">
    <property type="protein sequence ID" value="CAJ64833.1"/>
    <property type="molecule type" value="Genomic_DNA"/>
</dbReference>
<dbReference type="SMR" id="Q0RCJ1"/>
<dbReference type="STRING" id="326424.FRAAL6210"/>
<dbReference type="KEGG" id="fal:FRAAL6210"/>
<dbReference type="eggNOG" id="COG0495">
    <property type="taxonomic scope" value="Bacteria"/>
</dbReference>
<dbReference type="HOGENOM" id="CLU_004427_0_0_11"/>
<dbReference type="OrthoDB" id="9810365at2"/>
<dbReference type="Proteomes" id="UP000000657">
    <property type="component" value="Chromosome"/>
</dbReference>
<dbReference type="GO" id="GO:0005829">
    <property type="term" value="C:cytosol"/>
    <property type="evidence" value="ECO:0007669"/>
    <property type="project" value="TreeGrafter"/>
</dbReference>
<dbReference type="GO" id="GO:0002161">
    <property type="term" value="F:aminoacyl-tRNA deacylase activity"/>
    <property type="evidence" value="ECO:0007669"/>
    <property type="project" value="InterPro"/>
</dbReference>
<dbReference type="GO" id="GO:0005524">
    <property type="term" value="F:ATP binding"/>
    <property type="evidence" value="ECO:0007669"/>
    <property type="project" value="UniProtKB-UniRule"/>
</dbReference>
<dbReference type="GO" id="GO:0004823">
    <property type="term" value="F:leucine-tRNA ligase activity"/>
    <property type="evidence" value="ECO:0007669"/>
    <property type="project" value="UniProtKB-UniRule"/>
</dbReference>
<dbReference type="GO" id="GO:0006429">
    <property type="term" value="P:leucyl-tRNA aminoacylation"/>
    <property type="evidence" value="ECO:0007669"/>
    <property type="project" value="UniProtKB-UniRule"/>
</dbReference>
<dbReference type="CDD" id="cd07958">
    <property type="entry name" value="Anticodon_Ia_Leu_BEm"/>
    <property type="match status" value="1"/>
</dbReference>
<dbReference type="FunFam" id="1.10.730.10:FF:000002">
    <property type="entry name" value="Leucine--tRNA ligase"/>
    <property type="match status" value="1"/>
</dbReference>
<dbReference type="FunFam" id="3.40.50.620:FF:000056">
    <property type="entry name" value="Leucine--tRNA ligase"/>
    <property type="match status" value="1"/>
</dbReference>
<dbReference type="FunFam" id="3.40.50.620:FF:000060">
    <property type="entry name" value="Leucine--tRNA ligase"/>
    <property type="match status" value="1"/>
</dbReference>
<dbReference type="FunFam" id="3.40.50.620:FF:000087">
    <property type="entry name" value="Leucine--tRNA ligase"/>
    <property type="match status" value="1"/>
</dbReference>
<dbReference type="Gene3D" id="3.40.50.620">
    <property type="entry name" value="HUPs"/>
    <property type="match status" value="3"/>
</dbReference>
<dbReference type="Gene3D" id="1.10.730.10">
    <property type="entry name" value="Isoleucyl-tRNA Synthetase, Domain 1"/>
    <property type="match status" value="1"/>
</dbReference>
<dbReference type="Gene3D" id="3.90.740.10">
    <property type="entry name" value="Valyl/Leucyl/Isoleucyl-tRNA synthetase, editing domain"/>
    <property type="match status" value="1"/>
</dbReference>
<dbReference type="HAMAP" id="MF_00049_B">
    <property type="entry name" value="Leu_tRNA_synth_B"/>
    <property type="match status" value="1"/>
</dbReference>
<dbReference type="InterPro" id="IPR002302">
    <property type="entry name" value="Leu-tRNA-ligase"/>
</dbReference>
<dbReference type="InterPro" id="IPR025709">
    <property type="entry name" value="Leu_tRNA-synth_edit"/>
</dbReference>
<dbReference type="InterPro" id="IPR013155">
    <property type="entry name" value="M/V/L/I-tRNA-synth_anticd-bd"/>
</dbReference>
<dbReference type="InterPro" id="IPR015413">
    <property type="entry name" value="Methionyl/Leucyl_tRNA_Synth"/>
</dbReference>
<dbReference type="InterPro" id="IPR014729">
    <property type="entry name" value="Rossmann-like_a/b/a_fold"/>
</dbReference>
<dbReference type="InterPro" id="IPR009080">
    <property type="entry name" value="tRNAsynth_Ia_anticodon-bd"/>
</dbReference>
<dbReference type="InterPro" id="IPR009008">
    <property type="entry name" value="Val/Leu/Ile-tRNA-synth_edit"/>
</dbReference>
<dbReference type="PANTHER" id="PTHR43740:SF2">
    <property type="entry name" value="LEUCINE--TRNA LIGASE, MITOCHONDRIAL"/>
    <property type="match status" value="1"/>
</dbReference>
<dbReference type="PANTHER" id="PTHR43740">
    <property type="entry name" value="LEUCYL-TRNA SYNTHETASE"/>
    <property type="match status" value="1"/>
</dbReference>
<dbReference type="Pfam" id="PF08264">
    <property type="entry name" value="Anticodon_1"/>
    <property type="match status" value="1"/>
</dbReference>
<dbReference type="Pfam" id="PF13603">
    <property type="entry name" value="tRNA-synt_1_2"/>
    <property type="match status" value="2"/>
</dbReference>
<dbReference type="Pfam" id="PF09334">
    <property type="entry name" value="tRNA-synt_1g"/>
    <property type="match status" value="1"/>
</dbReference>
<dbReference type="SUPFAM" id="SSF47323">
    <property type="entry name" value="Anticodon-binding domain of a subclass of class I aminoacyl-tRNA synthetases"/>
    <property type="match status" value="1"/>
</dbReference>
<dbReference type="SUPFAM" id="SSF52374">
    <property type="entry name" value="Nucleotidylyl transferase"/>
    <property type="match status" value="1"/>
</dbReference>
<dbReference type="SUPFAM" id="SSF50677">
    <property type="entry name" value="ValRS/IleRS/LeuRS editing domain"/>
    <property type="match status" value="1"/>
</dbReference>
<gene>
    <name evidence="1" type="primary">leuS</name>
    <name type="ordered locus">FRAAL6210</name>
</gene>
<sequence length="1069" mass="116994">MSQGRRTNELGWHERMSETAEHGTGAANATASPSGAVPPSGATATAGTGDEPGFRYDARLAADIERRWQRRWADEGTFNSPNPVGPLAAGFDEVAGREPFYIMDMFPYPSGTGLHVGHPLGYIGTDVFARYLRMSGRHVLHPFGYDAFGLPAEQYAINTGQHPRTTTDANIANMRRQLSRLGLGHDTRREIATTDVGYYRWTQWIFEQIFDAWYDPQAGRARPIAELIAEFEAGTRSPAAGPAAGTTAVSVDAVRAANPTGLPWAELDRVTRRRVVDAHRLAYISEQLVNWCPGLGTVLANEEVTAEGRSDIGNYPVFRRPLRQWVLRITAYAERLVDDLDLVDWSDSIKQMQRNWIGPSDGAGVEFAVVPPSGSAGAAPGQRIEVYTTRPDTLAGATFLVLAPEHPQVDALVADAWPAGTPGAWRFPAGRGPAVGEAAEVAAEEVAAEEVGAAEVEAAAADPAWTPRAAVEAYRAFAARRSDRQRGEEVDRTGVFTGAYVRNPVGGGLLPVFLADYVLVGYGTGAIMAVPAHDSRDFSFARAFDLPIPAVLAPDEQWYAEHRVTPGAPPSAWPEAFGGEGAYLPGPAGTPVLAGLTKPDAIKTTVRWLEDGGHGRLARSYRLRDWLFSRQRYWGEPFPIVFDDDGLPYAVPDELLPVELPEMTDFRPTAMAEDDESDPVPPLARVADWASVTLDLGDGPKRYRRETNTMPQWAGSCWYHLRYLDPTNTERFVDETVERYWLAKPGAAAGDGGVDLYVGGVEHAVLHLLYARFWQKVLYDLGHVSSKEPFKRLFNQGYIQADAFTDARGMYVPAAEVKQTDDGRFTHHGAPVDRRSGKMGKSLKNSVSPDEMYERFGADTLRVYEMAMGPLDADRPWHTDDIVGSHRFLQRLWRAVVDEGSGTVAVSDEQLDAEATRVLHRTIITLAAEYAGLRFNTAVARLIELTNYVSKRYGQAATPRALAEPLVLMVAPLAPHIAEELWTRLGHSESVSRAAFPVGDPALAAESERTIPVQVNGKVRFTLQVPDGAAEPVIRELLTAHPDYARQTEGRTIKKTIIVPGRIVNIALG</sequence>
<feature type="chain" id="PRO_0000334758" description="Leucine--tRNA ligase">
    <location>
        <begin position="1"/>
        <end position="1069"/>
    </location>
</feature>
<feature type="region of interest" description="Disordered" evidence="2">
    <location>
        <begin position="19"/>
        <end position="53"/>
    </location>
</feature>
<feature type="region of interest" description="Disordered" evidence="2">
    <location>
        <begin position="823"/>
        <end position="846"/>
    </location>
</feature>
<feature type="short sequence motif" description="'HIGH' region">
    <location>
        <begin position="107"/>
        <end position="118"/>
    </location>
</feature>
<feature type="short sequence motif" description="'KMSKS' region">
    <location>
        <begin position="838"/>
        <end position="842"/>
    </location>
</feature>
<feature type="compositionally biased region" description="Basic and acidic residues" evidence="2">
    <location>
        <begin position="823"/>
        <end position="836"/>
    </location>
</feature>
<feature type="binding site" evidence="1">
    <location>
        <position position="841"/>
    </location>
    <ligand>
        <name>ATP</name>
        <dbReference type="ChEBI" id="CHEBI:30616"/>
    </ligand>
</feature>
<accession>Q0RCJ1</accession>